<sequence>MSATANLKKDYQERIVPALMKQFGYTSVMQVPVLKKIVINQGLGMATGDKKIIDVAVSELTAITGQKAVPTVSKKDISNFKLRKKMPIGVMVTLRREQMYEFLERLVRIALPRIRDFKGIESKLDGRGNYTLGINEQIIFPEINIDAITKILGMNITFVTSAQSDEEGYALLKEFGLPFKNAKKQN</sequence>
<protein>
    <recommendedName>
        <fullName evidence="1">Large ribosomal subunit protein uL5</fullName>
    </recommendedName>
    <alternativeName>
        <fullName evidence="2">50S ribosomal protein L5</fullName>
    </alternativeName>
</protein>
<dbReference type="EMBL" id="AE015924">
    <property type="protein sequence ID" value="AAQ66907.1"/>
    <property type="molecule type" value="Genomic_DNA"/>
</dbReference>
<dbReference type="RefSeq" id="WP_004583586.1">
    <property type="nucleotide sequence ID" value="NC_002950.2"/>
</dbReference>
<dbReference type="SMR" id="Q7MTM5"/>
<dbReference type="STRING" id="242619.PG_1926"/>
<dbReference type="EnsemblBacteria" id="AAQ66907">
    <property type="protein sequence ID" value="AAQ66907"/>
    <property type="gene ID" value="PG_1926"/>
</dbReference>
<dbReference type="GeneID" id="29257007"/>
<dbReference type="GeneID" id="57239584"/>
<dbReference type="KEGG" id="pgi:PG_1926"/>
<dbReference type="eggNOG" id="COG0094">
    <property type="taxonomic scope" value="Bacteria"/>
</dbReference>
<dbReference type="HOGENOM" id="CLU_061015_2_1_10"/>
<dbReference type="Proteomes" id="UP000000588">
    <property type="component" value="Chromosome"/>
</dbReference>
<dbReference type="GO" id="GO:1990904">
    <property type="term" value="C:ribonucleoprotein complex"/>
    <property type="evidence" value="ECO:0007669"/>
    <property type="project" value="UniProtKB-KW"/>
</dbReference>
<dbReference type="GO" id="GO:0005840">
    <property type="term" value="C:ribosome"/>
    <property type="evidence" value="ECO:0007669"/>
    <property type="project" value="UniProtKB-KW"/>
</dbReference>
<dbReference type="GO" id="GO:0019843">
    <property type="term" value="F:rRNA binding"/>
    <property type="evidence" value="ECO:0007669"/>
    <property type="project" value="UniProtKB-UniRule"/>
</dbReference>
<dbReference type="GO" id="GO:0003735">
    <property type="term" value="F:structural constituent of ribosome"/>
    <property type="evidence" value="ECO:0007669"/>
    <property type="project" value="InterPro"/>
</dbReference>
<dbReference type="GO" id="GO:0000049">
    <property type="term" value="F:tRNA binding"/>
    <property type="evidence" value="ECO:0007669"/>
    <property type="project" value="UniProtKB-UniRule"/>
</dbReference>
<dbReference type="GO" id="GO:0006412">
    <property type="term" value="P:translation"/>
    <property type="evidence" value="ECO:0007669"/>
    <property type="project" value="UniProtKB-UniRule"/>
</dbReference>
<dbReference type="FunFam" id="3.30.1440.10:FF:000001">
    <property type="entry name" value="50S ribosomal protein L5"/>
    <property type="match status" value="1"/>
</dbReference>
<dbReference type="Gene3D" id="3.30.1440.10">
    <property type="match status" value="1"/>
</dbReference>
<dbReference type="HAMAP" id="MF_01333_B">
    <property type="entry name" value="Ribosomal_uL5_B"/>
    <property type="match status" value="1"/>
</dbReference>
<dbReference type="InterPro" id="IPR002132">
    <property type="entry name" value="Ribosomal_uL5"/>
</dbReference>
<dbReference type="InterPro" id="IPR020930">
    <property type="entry name" value="Ribosomal_uL5_bac-type"/>
</dbReference>
<dbReference type="InterPro" id="IPR031309">
    <property type="entry name" value="Ribosomal_uL5_C"/>
</dbReference>
<dbReference type="InterPro" id="IPR022803">
    <property type="entry name" value="Ribosomal_uL5_dom_sf"/>
</dbReference>
<dbReference type="InterPro" id="IPR031310">
    <property type="entry name" value="Ribosomal_uL5_N"/>
</dbReference>
<dbReference type="NCBIfam" id="NF000585">
    <property type="entry name" value="PRK00010.1"/>
    <property type="match status" value="1"/>
</dbReference>
<dbReference type="PANTHER" id="PTHR11994">
    <property type="entry name" value="60S RIBOSOMAL PROTEIN L11-RELATED"/>
    <property type="match status" value="1"/>
</dbReference>
<dbReference type="Pfam" id="PF00281">
    <property type="entry name" value="Ribosomal_L5"/>
    <property type="match status" value="1"/>
</dbReference>
<dbReference type="Pfam" id="PF00673">
    <property type="entry name" value="Ribosomal_L5_C"/>
    <property type="match status" value="1"/>
</dbReference>
<dbReference type="PIRSF" id="PIRSF002161">
    <property type="entry name" value="Ribosomal_L5"/>
    <property type="match status" value="1"/>
</dbReference>
<dbReference type="SUPFAM" id="SSF55282">
    <property type="entry name" value="RL5-like"/>
    <property type="match status" value="1"/>
</dbReference>
<name>RL5_PORGI</name>
<keyword id="KW-1185">Reference proteome</keyword>
<keyword id="KW-0687">Ribonucleoprotein</keyword>
<keyword id="KW-0689">Ribosomal protein</keyword>
<keyword id="KW-0694">RNA-binding</keyword>
<keyword id="KW-0699">rRNA-binding</keyword>
<keyword id="KW-0820">tRNA-binding</keyword>
<proteinExistence type="inferred from homology"/>
<feature type="chain" id="PRO_0000124965" description="Large ribosomal subunit protein uL5">
    <location>
        <begin position="1"/>
        <end position="186"/>
    </location>
</feature>
<comment type="function">
    <text evidence="1">This is one of the proteins that bind and probably mediate the attachment of the 5S RNA into the large ribosomal subunit, where it forms part of the central protuberance. In the 70S ribosome it contacts protein S13 of the 30S subunit (bridge B1b), connecting the 2 subunits; this bridge is implicated in subunit movement. Contacts the P site tRNA; the 5S rRNA and some of its associated proteins might help stabilize positioning of ribosome-bound tRNAs.</text>
</comment>
<comment type="subunit">
    <text evidence="1">Part of the 50S ribosomal subunit; part of the 5S rRNA/L5/L18/L25 subcomplex. Contacts the 5S rRNA and the P site tRNA. Forms a bridge to the 30S subunit in the 70S ribosome.</text>
</comment>
<comment type="similarity">
    <text evidence="1">Belongs to the universal ribosomal protein uL5 family.</text>
</comment>
<gene>
    <name evidence="1" type="primary">rplE</name>
    <name type="ordered locus">PG_1926</name>
</gene>
<evidence type="ECO:0000255" key="1">
    <source>
        <dbReference type="HAMAP-Rule" id="MF_01333"/>
    </source>
</evidence>
<evidence type="ECO:0000305" key="2"/>
<reference key="1">
    <citation type="journal article" date="2003" name="J. Bacteriol.">
        <title>Complete genome sequence of the oral pathogenic bacterium Porphyromonas gingivalis strain W83.</title>
        <authorList>
            <person name="Nelson K.E."/>
            <person name="Fleischmann R.D."/>
            <person name="DeBoy R.T."/>
            <person name="Paulsen I.T."/>
            <person name="Fouts D.E."/>
            <person name="Eisen J.A."/>
            <person name="Daugherty S.C."/>
            <person name="Dodson R.J."/>
            <person name="Durkin A.S."/>
            <person name="Gwinn M.L."/>
            <person name="Haft D.H."/>
            <person name="Kolonay J.F."/>
            <person name="Nelson W.C."/>
            <person name="Mason T.M."/>
            <person name="Tallon L."/>
            <person name="Gray J."/>
            <person name="Granger D."/>
            <person name="Tettelin H."/>
            <person name="Dong H."/>
            <person name="Galvin J.L."/>
            <person name="Duncan M.J."/>
            <person name="Dewhirst F.E."/>
            <person name="Fraser C.M."/>
        </authorList>
    </citation>
    <scope>NUCLEOTIDE SEQUENCE [LARGE SCALE GENOMIC DNA]</scope>
    <source>
        <strain>ATCC BAA-308 / W83</strain>
    </source>
</reference>
<organism>
    <name type="scientific">Porphyromonas gingivalis (strain ATCC BAA-308 / W83)</name>
    <dbReference type="NCBI Taxonomy" id="242619"/>
    <lineage>
        <taxon>Bacteria</taxon>
        <taxon>Pseudomonadati</taxon>
        <taxon>Bacteroidota</taxon>
        <taxon>Bacteroidia</taxon>
        <taxon>Bacteroidales</taxon>
        <taxon>Porphyromonadaceae</taxon>
        <taxon>Porphyromonas</taxon>
    </lineage>
</organism>
<accession>Q7MTM5</accession>